<name>ISPF_YERP3</name>
<evidence type="ECO:0000255" key="1">
    <source>
        <dbReference type="HAMAP-Rule" id="MF_00107"/>
    </source>
</evidence>
<keyword id="KW-0414">Isoprene biosynthesis</keyword>
<keyword id="KW-0456">Lyase</keyword>
<keyword id="KW-0479">Metal-binding</keyword>
<protein>
    <recommendedName>
        <fullName evidence="1">2-C-methyl-D-erythritol 2,4-cyclodiphosphate synthase</fullName>
        <shortName evidence="1">MECDP-synthase</shortName>
        <shortName evidence="1">MECPP-synthase</shortName>
        <shortName evidence="1">MECPS</shortName>
        <ecNumber evidence="1">4.6.1.12</ecNumber>
    </recommendedName>
</protein>
<organism>
    <name type="scientific">Yersinia pseudotuberculosis serotype O:1b (strain IP 31758)</name>
    <dbReference type="NCBI Taxonomy" id="349747"/>
    <lineage>
        <taxon>Bacteria</taxon>
        <taxon>Pseudomonadati</taxon>
        <taxon>Pseudomonadota</taxon>
        <taxon>Gammaproteobacteria</taxon>
        <taxon>Enterobacterales</taxon>
        <taxon>Yersiniaceae</taxon>
        <taxon>Yersinia</taxon>
    </lineage>
</organism>
<sequence>MRIGHGFDVHKFGENGSGPLIIGGVRIPYEKGLLAHSDGDVALHAATDALLGAAALGDIGKLFPDTDPAFKGADSRGLLREAYRRILAKGYKLGNLDITIIAQAPKMAPHIPQMRVNLAEDLQCHMDDINVKATTTEQLGFTGRGEGIACEAVVLLVNVEQG</sequence>
<proteinExistence type="inferred from homology"/>
<comment type="function">
    <text evidence="1">Involved in the biosynthesis of isopentenyl diphosphate (IPP) and dimethylallyl diphosphate (DMAPP), two major building blocks of isoprenoid compounds. Catalyzes the conversion of 4-diphosphocytidyl-2-C-methyl-D-erythritol 2-phosphate (CDP-ME2P) to 2-C-methyl-D-erythritol 2,4-cyclodiphosphate (ME-CPP) with a corresponding release of cytidine 5-monophosphate (CMP).</text>
</comment>
<comment type="catalytic activity">
    <reaction evidence="1">
        <text>4-CDP-2-C-methyl-D-erythritol 2-phosphate = 2-C-methyl-D-erythritol 2,4-cyclic diphosphate + CMP</text>
        <dbReference type="Rhea" id="RHEA:23864"/>
        <dbReference type="ChEBI" id="CHEBI:57919"/>
        <dbReference type="ChEBI" id="CHEBI:58483"/>
        <dbReference type="ChEBI" id="CHEBI:60377"/>
        <dbReference type="EC" id="4.6.1.12"/>
    </reaction>
</comment>
<comment type="cofactor">
    <cofactor evidence="1">
        <name>a divalent metal cation</name>
        <dbReference type="ChEBI" id="CHEBI:60240"/>
    </cofactor>
    <text evidence="1">Binds 1 divalent metal cation per subunit.</text>
</comment>
<comment type="pathway">
    <text evidence="1">Isoprenoid biosynthesis; isopentenyl diphosphate biosynthesis via DXP pathway; isopentenyl diphosphate from 1-deoxy-D-xylulose 5-phosphate: step 4/6.</text>
</comment>
<comment type="subunit">
    <text evidence="1">Homotrimer.</text>
</comment>
<comment type="similarity">
    <text evidence="1">Belongs to the IspF family.</text>
</comment>
<accession>A7FLX7</accession>
<dbReference type="EC" id="4.6.1.12" evidence="1"/>
<dbReference type="EMBL" id="CP000720">
    <property type="protein sequence ID" value="ABS48025.1"/>
    <property type="molecule type" value="Genomic_DNA"/>
</dbReference>
<dbReference type="RefSeq" id="WP_002209392.1">
    <property type="nucleotide sequence ID" value="NC_009708.1"/>
</dbReference>
<dbReference type="SMR" id="A7FLX7"/>
<dbReference type="GeneID" id="96664269"/>
<dbReference type="KEGG" id="ypi:YpsIP31758_3298"/>
<dbReference type="HOGENOM" id="CLU_084630_2_0_6"/>
<dbReference type="UniPathway" id="UPA00056">
    <property type="reaction ID" value="UER00095"/>
</dbReference>
<dbReference type="Proteomes" id="UP000002412">
    <property type="component" value="Chromosome"/>
</dbReference>
<dbReference type="GO" id="GO:0008685">
    <property type="term" value="F:2-C-methyl-D-erythritol 2,4-cyclodiphosphate synthase activity"/>
    <property type="evidence" value="ECO:0007669"/>
    <property type="project" value="UniProtKB-UniRule"/>
</dbReference>
<dbReference type="GO" id="GO:0046872">
    <property type="term" value="F:metal ion binding"/>
    <property type="evidence" value="ECO:0007669"/>
    <property type="project" value="UniProtKB-KW"/>
</dbReference>
<dbReference type="GO" id="GO:0019288">
    <property type="term" value="P:isopentenyl diphosphate biosynthetic process, methylerythritol 4-phosphate pathway"/>
    <property type="evidence" value="ECO:0007669"/>
    <property type="project" value="UniProtKB-UniRule"/>
</dbReference>
<dbReference type="GO" id="GO:0016114">
    <property type="term" value="P:terpenoid biosynthetic process"/>
    <property type="evidence" value="ECO:0007669"/>
    <property type="project" value="InterPro"/>
</dbReference>
<dbReference type="CDD" id="cd00554">
    <property type="entry name" value="MECDP_synthase"/>
    <property type="match status" value="1"/>
</dbReference>
<dbReference type="FunFam" id="3.30.1330.50:FF:000001">
    <property type="entry name" value="2-C-methyl-D-erythritol 2,4-cyclodiphosphate synthase"/>
    <property type="match status" value="1"/>
</dbReference>
<dbReference type="Gene3D" id="3.30.1330.50">
    <property type="entry name" value="2-C-methyl-D-erythritol 2,4-cyclodiphosphate synthase"/>
    <property type="match status" value="1"/>
</dbReference>
<dbReference type="HAMAP" id="MF_00107">
    <property type="entry name" value="IspF"/>
    <property type="match status" value="1"/>
</dbReference>
<dbReference type="InterPro" id="IPR003526">
    <property type="entry name" value="MECDP_synthase"/>
</dbReference>
<dbReference type="InterPro" id="IPR020555">
    <property type="entry name" value="MECDP_synthase_CS"/>
</dbReference>
<dbReference type="InterPro" id="IPR036571">
    <property type="entry name" value="MECDP_synthase_sf"/>
</dbReference>
<dbReference type="NCBIfam" id="TIGR00151">
    <property type="entry name" value="ispF"/>
    <property type="match status" value="1"/>
</dbReference>
<dbReference type="PANTHER" id="PTHR43181">
    <property type="entry name" value="2-C-METHYL-D-ERYTHRITOL 2,4-CYCLODIPHOSPHATE SYNTHASE, CHLOROPLASTIC"/>
    <property type="match status" value="1"/>
</dbReference>
<dbReference type="PANTHER" id="PTHR43181:SF1">
    <property type="entry name" value="2-C-METHYL-D-ERYTHRITOL 2,4-CYCLODIPHOSPHATE SYNTHASE, CHLOROPLASTIC"/>
    <property type="match status" value="1"/>
</dbReference>
<dbReference type="Pfam" id="PF02542">
    <property type="entry name" value="YgbB"/>
    <property type="match status" value="1"/>
</dbReference>
<dbReference type="SUPFAM" id="SSF69765">
    <property type="entry name" value="IpsF-like"/>
    <property type="match status" value="1"/>
</dbReference>
<dbReference type="PROSITE" id="PS01350">
    <property type="entry name" value="ISPF"/>
    <property type="match status" value="1"/>
</dbReference>
<reference key="1">
    <citation type="journal article" date="2007" name="PLoS Genet.">
        <title>The complete genome sequence of Yersinia pseudotuberculosis IP31758, the causative agent of Far East scarlet-like fever.</title>
        <authorList>
            <person name="Eppinger M."/>
            <person name="Rosovitz M.J."/>
            <person name="Fricke W.F."/>
            <person name="Rasko D.A."/>
            <person name="Kokorina G."/>
            <person name="Fayolle C."/>
            <person name="Lindler L.E."/>
            <person name="Carniel E."/>
            <person name="Ravel J."/>
        </authorList>
    </citation>
    <scope>NUCLEOTIDE SEQUENCE [LARGE SCALE GENOMIC DNA]</scope>
    <source>
        <strain>IP 31758</strain>
    </source>
</reference>
<gene>
    <name evidence="1" type="primary">ispF</name>
    <name type="ordered locus">YpsIP31758_3298</name>
</gene>
<feature type="chain" id="PRO_1000057714" description="2-C-methyl-D-erythritol 2,4-cyclodiphosphate synthase">
    <location>
        <begin position="1"/>
        <end position="162"/>
    </location>
</feature>
<feature type="binding site" evidence="1">
    <location>
        <begin position="8"/>
        <end position="10"/>
    </location>
    <ligand>
        <name>4-CDP-2-C-methyl-D-erythritol 2-phosphate</name>
        <dbReference type="ChEBI" id="CHEBI:57919"/>
    </ligand>
</feature>
<feature type="binding site" evidence="1">
    <location>
        <position position="8"/>
    </location>
    <ligand>
        <name>a divalent metal cation</name>
        <dbReference type="ChEBI" id="CHEBI:60240"/>
    </ligand>
</feature>
<feature type="binding site" evidence="1">
    <location>
        <position position="10"/>
    </location>
    <ligand>
        <name>a divalent metal cation</name>
        <dbReference type="ChEBI" id="CHEBI:60240"/>
    </ligand>
</feature>
<feature type="binding site" evidence="1">
    <location>
        <begin position="36"/>
        <end position="37"/>
    </location>
    <ligand>
        <name>4-CDP-2-C-methyl-D-erythritol 2-phosphate</name>
        <dbReference type="ChEBI" id="CHEBI:57919"/>
    </ligand>
</feature>
<feature type="binding site" evidence="1">
    <location>
        <position position="44"/>
    </location>
    <ligand>
        <name>a divalent metal cation</name>
        <dbReference type="ChEBI" id="CHEBI:60240"/>
    </ligand>
</feature>
<feature type="binding site" evidence="1">
    <location>
        <begin position="58"/>
        <end position="60"/>
    </location>
    <ligand>
        <name>4-CDP-2-C-methyl-D-erythritol 2-phosphate</name>
        <dbReference type="ChEBI" id="CHEBI:57919"/>
    </ligand>
</feature>
<feature type="binding site" evidence="1">
    <location>
        <begin position="63"/>
        <end position="67"/>
    </location>
    <ligand>
        <name>4-CDP-2-C-methyl-D-erythritol 2-phosphate</name>
        <dbReference type="ChEBI" id="CHEBI:57919"/>
    </ligand>
</feature>
<feature type="binding site" evidence="1">
    <location>
        <begin position="102"/>
        <end position="108"/>
    </location>
    <ligand>
        <name>4-CDP-2-C-methyl-D-erythritol 2-phosphate</name>
        <dbReference type="ChEBI" id="CHEBI:57919"/>
    </ligand>
</feature>
<feature type="binding site" evidence="1">
    <location>
        <begin position="134"/>
        <end position="137"/>
    </location>
    <ligand>
        <name>4-CDP-2-C-methyl-D-erythritol 2-phosphate</name>
        <dbReference type="ChEBI" id="CHEBI:57919"/>
    </ligand>
</feature>
<feature type="binding site" evidence="1">
    <location>
        <position position="141"/>
    </location>
    <ligand>
        <name>4-CDP-2-C-methyl-D-erythritol 2-phosphate</name>
        <dbReference type="ChEBI" id="CHEBI:57919"/>
    </ligand>
</feature>
<feature type="binding site" evidence="1">
    <location>
        <position position="144"/>
    </location>
    <ligand>
        <name>4-CDP-2-C-methyl-D-erythritol 2-phosphate</name>
        <dbReference type="ChEBI" id="CHEBI:57919"/>
    </ligand>
</feature>
<feature type="site" description="Transition state stabilizer" evidence="1">
    <location>
        <position position="36"/>
    </location>
</feature>
<feature type="site" description="Transition state stabilizer" evidence="1">
    <location>
        <position position="135"/>
    </location>
</feature>